<evidence type="ECO:0000250" key="1"/>
<evidence type="ECO:0000250" key="2">
    <source>
        <dbReference type="UniProtKB" id="P20109"/>
    </source>
</evidence>
<evidence type="ECO:0000250" key="3">
    <source>
        <dbReference type="UniProtKB" id="P35225"/>
    </source>
</evidence>
<evidence type="ECO:0000250" key="4">
    <source>
        <dbReference type="UniProtKB" id="P42203"/>
    </source>
</evidence>
<evidence type="ECO:0000255" key="5"/>
<evidence type="ECO:0000305" key="6"/>
<keyword id="KW-0202">Cytokine</keyword>
<keyword id="KW-1015">Disulfide bond</keyword>
<keyword id="KW-0325">Glycoprotein</keyword>
<keyword id="KW-0964">Secreted</keyword>
<keyword id="KW-0732">Signal</keyword>
<organism>
    <name type="scientific">Lama glama</name>
    <name type="common">Llama</name>
    <dbReference type="NCBI Taxonomy" id="9844"/>
    <lineage>
        <taxon>Eukaryota</taxon>
        <taxon>Metazoa</taxon>
        <taxon>Chordata</taxon>
        <taxon>Craniata</taxon>
        <taxon>Vertebrata</taxon>
        <taxon>Euteleostomi</taxon>
        <taxon>Mammalia</taxon>
        <taxon>Eutheria</taxon>
        <taxon>Laurasiatheria</taxon>
        <taxon>Artiodactyla</taxon>
        <taxon>Tylopoda</taxon>
        <taxon>Camelidae</taxon>
        <taxon>Lama</taxon>
    </lineage>
</organism>
<comment type="function">
    <text evidence="2 3 4">Cytokine that plays important roles in allergic inflammation and immune response to parasite infection. Synergizes with IL2 in regulating interferon-gamma synthesis. Stimulates B-cell proliferation, and activation of eosinophils, basophils, and mast cells (By similarity). Plays an important role in controlling IL33 activity by modulating the production of transmembrane and soluble forms of interleukin-1 receptor-like 1/IL1RL1 (By similarity). Displays the capacity to antagonize Th1-driven proinflammatory immune response and downregulates synthesis of many proinflammatory cytokines including IL1, IL6, IL10, IL12 and TNF-alpha through a mechanism that partially involves suppression of NF-kappa-B (By similarity). Also functions on nonhematopoietic cells, including endothelial cells where it induces vascular cell adhesion protein 1/VCAM1, which is important in the recruitment of eosinophils. Exerts its biological effects through its receptors which comprises the IL4R chain and the IL13RA1 chain, to activate JAK1 and TYK2, leading to the activation of STAT6. Aside from IL13RA1, another receptor IL13RA2 acts as a high affinity decoy for IL13 and mediates internalization and depletion of extracellular IL13 (By similarity).</text>
</comment>
<comment type="subunit">
    <text evidence="1">Interacts with IL13RA2.</text>
</comment>
<comment type="subcellular location">
    <subcellularLocation>
        <location>Secreted</location>
    </subcellularLocation>
</comment>
<comment type="similarity">
    <text evidence="6">Belongs to the IL-4/IL-13 family.</text>
</comment>
<name>IL13_LAMGL</name>
<sequence length="136" mass="15289">MALWLTVVIAFTCIGGLASPVPTPSPKALKELIEELVNITQNQKAPLCNGSMVWSINLTTSMYCAARESLINITNCSVIQRTQRMLNALCPHKLSAKVSSEHVRDTKIEVTQFIKTLLQHSRNVFHYRSFNWSKKS</sequence>
<gene>
    <name type="primary">IL13</name>
</gene>
<proteinExistence type="evidence at transcript level"/>
<dbReference type="EMBL" id="AB107650">
    <property type="protein sequence ID" value="BAC75387.1"/>
    <property type="molecule type" value="mRNA"/>
</dbReference>
<dbReference type="SMR" id="Q865X3"/>
<dbReference type="GlyCosmos" id="Q865X3">
    <property type="glycosylation" value="6 sites, No reported glycans"/>
</dbReference>
<dbReference type="GO" id="GO:0005615">
    <property type="term" value="C:extracellular space"/>
    <property type="evidence" value="ECO:0007669"/>
    <property type="project" value="UniProtKB-KW"/>
</dbReference>
<dbReference type="GO" id="GO:0005125">
    <property type="term" value="F:cytokine activity"/>
    <property type="evidence" value="ECO:0007669"/>
    <property type="project" value="UniProtKB-KW"/>
</dbReference>
<dbReference type="GO" id="GO:0005126">
    <property type="term" value="F:cytokine receptor binding"/>
    <property type="evidence" value="ECO:0007669"/>
    <property type="project" value="InterPro"/>
</dbReference>
<dbReference type="GO" id="GO:0006955">
    <property type="term" value="P:immune response"/>
    <property type="evidence" value="ECO:0007669"/>
    <property type="project" value="InterPro"/>
</dbReference>
<dbReference type="FunFam" id="1.20.1250.10:FF:000029">
    <property type="entry name" value="Interleukin-13"/>
    <property type="match status" value="1"/>
</dbReference>
<dbReference type="Gene3D" id="1.20.1250.10">
    <property type="match status" value="1"/>
</dbReference>
<dbReference type="InterPro" id="IPR009079">
    <property type="entry name" value="4_helix_cytokine-like_core"/>
</dbReference>
<dbReference type="InterPro" id="IPR020470">
    <property type="entry name" value="IL-13"/>
</dbReference>
<dbReference type="InterPro" id="IPR001325">
    <property type="entry name" value="IL-4/IL-13"/>
</dbReference>
<dbReference type="InterPro" id="IPR018096">
    <property type="entry name" value="IL-4/IL-13_CS"/>
</dbReference>
<dbReference type="PANTHER" id="PTHR48486">
    <property type="entry name" value="INTERLEUKIN-13"/>
    <property type="match status" value="1"/>
</dbReference>
<dbReference type="PANTHER" id="PTHR48486:SF1">
    <property type="entry name" value="INTERLEUKIN-13"/>
    <property type="match status" value="1"/>
</dbReference>
<dbReference type="Pfam" id="PF03487">
    <property type="entry name" value="IL13"/>
    <property type="match status" value="1"/>
</dbReference>
<dbReference type="PRINTS" id="PR01929">
    <property type="entry name" value="INTRLEUKIN13"/>
</dbReference>
<dbReference type="SMART" id="SM00190">
    <property type="entry name" value="IL4_13"/>
    <property type="match status" value="1"/>
</dbReference>
<dbReference type="SUPFAM" id="SSF47266">
    <property type="entry name" value="4-helical cytokines"/>
    <property type="match status" value="1"/>
</dbReference>
<dbReference type="PROSITE" id="PS00838">
    <property type="entry name" value="INTERLEUKIN_4_13"/>
    <property type="match status" value="1"/>
</dbReference>
<accession>Q865X3</accession>
<reference key="1">
    <citation type="submission" date="2003-04" db="EMBL/GenBank/DDBJ databases">
        <title>Cloning and sequence analysis of cytokine cDNAs of llama and camel.</title>
        <authorList>
            <person name="Odbileg R."/>
            <person name="Lee S.-I."/>
            <person name="Yoshida R."/>
            <person name="Chang K.-S."/>
            <person name="Ohashi K."/>
            <person name="Sugimoto C."/>
            <person name="Onuma M."/>
        </authorList>
    </citation>
    <scope>NUCLEOTIDE SEQUENCE [MRNA]</scope>
</reference>
<protein>
    <recommendedName>
        <fullName>Interleukin-13</fullName>
        <shortName>IL-13</shortName>
    </recommendedName>
</protein>
<feature type="signal peptide" evidence="5">
    <location>
        <begin position="1"/>
        <end position="18"/>
    </location>
</feature>
<feature type="chain" id="PRO_0000015548" description="Interleukin-13">
    <location>
        <begin position="19"/>
        <end position="136"/>
    </location>
</feature>
<feature type="glycosylation site" description="N-linked (GlcNAc...) asparagine" evidence="5">
    <location>
        <position position="38"/>
    </location>
</feature>
<feature type="glycosylation site" description="N-linked (GlcNAc...) asparagine" evidence="5">
    <location>
        <position position="49"/>
    </location>
</feature>
<feature type="glycosylation site" description="N-linked (GlcNAc...) asparagine" evidence="5">
    <location>
        <position position="57"/>
    </location>
</feature>
<feature type="glycosylation site" description="N-linked (GlcNAc...) asparagine" evidence="5">
    <location>
        <position position="72"/>
    </location>
</feature>
<feature type="glycosylation site" description="N-linked (GlcNAc...) asparagine" evidence="5">
    <location>
        <position position="75"/>
    </location>
</feature>
<feature type="glycosylation site" description="N-linked (GlcNAc...) asparagine" evidence="5">
    <location>
        <position position="131"/>
    </location>
</feature>
<feature type="disulfide bond" evidence="3">
    <location>
        <begin position="48"/>
        <end position="76"/>
    </location>
</feature>
<feature type="disulfide bond" evidence="3">
    <location>
        <begin position="64"/>
        <end position="90"/>
    </location>
</feature>